<gene>
    <name evidence="1" type="primary">tpx</name>
    <name type="ordered locus">STM1682</name>
</gene>
<protein>
    <recommendedName>
        <fullName evidence="1">Thiol peroxidase</fullName>
        <shortName evidence="1">Tpx</shortName>
        <ecNumber evidence="1">1.11.1.24</ecNumber>
    </recommendedName>
    <alternativeName>
        <fullName evidence="1">Peroxiredoxin tpx</fullName>
        <shortName evidence="1">Prx</shortName>
    </alternativeName>
    <alternativeName>
        <fullName evidence="1">Thioredoxin peroxidase</fullName>
    </alternativeName>
    <alternativeName>
        <fullName evidence="1">Thioredoxin-dependent peroxiredoxin</fullName>
    </alternativeName>
</protein>
<reference key="1">
    <citation type="journal article" date="2001" name="Nature">
        <title>Complete genome sequence of Salmonella enterica serovar Typhimurium LT2.</title>
        <authorList>
            <person name="McClelland M."/>
            <person name="Sanderson K.E."/>
            <person name="Spieth J."/>
            <person name="Clifton S.W."/>
            <person name="Latreille P."/>
            <person name="Courtney L."/>
            <person name="Porwollik S."/>
            <person name="Ali J."/>
            <person name="Dante M."/>
            <person name="Du F."/>
            <person name="Hou S."/>
            <person name="Layman D."/>
            <person name="Leonard S."/>
            <person name="Nguyen C."/>
            <person name="Scott K."/>
            <person name="Holmes A."/>
            <person name="Grewal N."/>
            <person name="Mulvaney E."/>
            <person name="Ryan E."/>
            <person name="Sun H."/>
            <person name="Florea L."/>
            <person name="Miller W."/>
            <person name="Stoneking T."/>
            <person name="Nhan M."/>
            <person name="Waterston R."/>
            <person name="Wilson R.K."/>
        </authorList>
    </citation>
    <scope>NUCLEOTIDE SEQUENCE [LARGE SCALE GENOMIC DNA]</scope>
    <source>
        <strain>LT2 / SGSC1412 / ATCC 700720</strain>
    </source>
</reference>
<proteinExistence type="inferred from homology"/>
<comment type="function">
    <text evidence="1">Thiol-specific peroxidase that catalyzes the reduction of hydrogen peroxide and organic hydroperoxides to water and alcohols, respectively. Plays a role in cell protection against oxidative stress by detoxifying peroxides.</text>
</comment>
<comment type="catalytic activity">
    <reaction evidence="1">
        <text>a hydroperoxide + [thioredoxin]-dithiol = an alcohol + [thioredoxin]-disulfide + H2O</text>
        <dbReference type="Rhea" id="RHEA:62620"/>
        <dbReference type="Rhea" id="RHEA-COMP:10698"/>
        <dbReference type="Rhea" id="RHEA-COMP:10700"/>
        <dbReference type="ChEBI" id="CHEBI:15377"/>
        <dbReference type="ChEBI" id="CHEBI:29950"/>
        <dbReference type="ChEBI" id="CHEBI:30879"/>
        <dbReference type="ChEBI" id="CHEBI:35924"/>
        <dbReference type="ChEBI" id="CHEBI:50058"/>
        <dbReference type="EC" id="1.11.1.24"/>
    </reaction>
</comment>
<comment type="subunit">
    <text evidence="1">Homodimer.</text>
</comment>
<comment type="miscellaneous">
    <text evidence="1">The active site is a conserved redox-active cysteine residue, the peroxidatic cysteine (C(P)), which makes the nucleophilic attack on the peroxide substrate. The peroxide oxidizes the C(P)-SH to cysteine sulfenic acid (C(P)-SOH), which then reacts with another cysteine residue, the resolving cysteine (C(R)), to form a disulfide bridge. The disulfide is subsequently reduced by an appropriate electron donor to complete the catalytic cycle. In this atypical 2-Cys peroxiredoxin, C(R) is present in the same subunit to form an intramolecular disulfide. The disulfide is subsequently reduced by thioredoxin.</text>
</comment>
<comment type="similarity">
    <text evidence="1">Belongs to the peroxiredoxin family. Tpx subfamily.</text>
</comment>
<evidence type="ECO:0000255" key="1">
    <source>
        <dbReference type="HAMAP-Rule" id="MF_00269"/>
    </source>
</evidence>
<feature type="chain" id="PRO_0000187895" description="Thiol peroxidase">
    <location>
        <begin position="1"/>
        <end position="168"/>
    </location>
</feature>
<feature type="domain" description="Thioredoxin" evidence="1">
    <location>
        <begin position="19"/>
        <end position="168"/>
    </location>
</feature>
<feature type="active site" description="Cysteine sulfenic acid (-SOH) intermediate" evidence="1">
    <location>
        <position position="61"/>
    </location>
</feature>
<feature type="disulfide bond" description="Redox-active" evidence="1">
    <location>
        <begin position="61"/>
        <end position="95"/>
    </location>
</feature>
<dbReference type="EC" id="1.11.1.24" evidence="1"/>
<dbReference type="EMBL" id="AE006468">
    <property type="protein sequence ID" value="AAL20599.1"/>
    <property type="molecule type" value="Genomic_DNA"/>
</dbReference>
<dbReference type="RefSeq" id="NP_460640.1">
    <property type="nucleotide sequence ID" value="NC_003197.2"/>
</dbReference>
<dbReference type="RefSeq" id="WP_000084401.1">
    <property type="nucleotide sequence ID" value="NC_003197.2"/>
</dbReference>
<dbReference type="SMR" id="Q8ZP65"/>
<dbReference type="STRING" id="99287.STM1682"/>
<dbReference type="PaxDb" id="99287-STM1682"/>
<dbReference type="GeneID" id="1253200"/>
<dbReference type="KEGG" id="stm:STM1682"/>
<dbReference type="PATRIC" id="fig|99287.12.peg.1776"/>
<dbReference type="HOGENOM" id="CLU_042529_12_2_6"/>
<dbReference type="OMA" id="ITQEPNY"/>
<dbReference type="PhylomeDB" id="Q8ZP65"/>
<dbReference type="BioCyc" id="SENT99287:STM1682-MONOMER"/>
<dbReference type="Proteomes" id="UP000001014">
    <property type="component" value="Chromosome"/>
</dbReference>
<dbReference type="GO" id="GO:0008379">
    <property type="term" value="F:thioredoxin peroxidase activity"/>
    <property type="evidence" value="ECO:0007669"/>
    <property type="project" value="UniProtKB-UniRule"/>
</dbReference>
<dbReference type="CDD" id="cd03014">
    <property type="entry name" value="PRX_Atyp2cys"/>
    <property type="match status" value="1"/>
</dbReference>
<dbReference type="FunFam" id="3.40.30.10:FF:000056">
    <property type="entry name" value="Thiol peroxidase"/>
    <property type="match status" value="1"/>
</dbReference>
<dbReference type="Gene3D" id="3.40.30.10">
    <property type="entry name" value="Glutaredoxin"/>
    <property type="match status" value="1"/>
</dbReference>
<dbReference type="HAMAP" id="MF_00269">
    <property type="entry name" value="Tpx"/>
    <property type="match status" value="1"/>
</dbReference>
<dbReference type="InterPro" id="IPR013740">
    <property type="entry name" value="Redoxin"/>
</dbReference>
<dbReference type="InterPro" id="IPR036249">
    <property type="entry name" value="Thioredoxin-like_sf"/>
</dbReference>
<dbReference type="InterPro" id="IPR013766">
    <property type="entry name" value="Thioredoxin_domain"/>
</dbReference>
<dbReference type="InterPro" id="IPR002065">
    <property type="entry name" value="TPX"/>
</dbReference>
<dbReference type="InterPro" id="IPR018219">
    <property type="entry name" value="Tpx_CS"/>
</dbReference>
<dbReference type="InterPro" id="IPR050455">
    <property type="entry name" value="Tpx_Peroxidase_subfamily"/>
</dbReference>
<dbReference type="NCBIfam" id="NF001808">
    <property type="entry name" value="PRK00522.1"/>
    <property type="match status" value="1"/>
</dbReference>
<dbReference type="PANTHER" id="PTHR43110">
    <property type="entry name" value="THIOL PEROXIDASE"/>
    <property type="match status" value="1"/>
</dbReference>
<dbReference type="PANTHER" id="PTHR43110:SF1">
    <property type="entry name" value="THIOL PEROXIDASE"/>
    <property type="match status" value="1"/>
</dbReference>
<dbReference type="Pfam" id="PF08534">
    <property type="entry name" value="Redoxin"/>
    <property type="match status" value="1"/>
</dbReference>
<dbReference type="SUPFAM" id="SSF52833">
    <property type="entry name" value="Thioredoxin-like"/>
    <property type="match status" value="1"/>
</dbReference>
<dbReference type="PROSITE" id="PS51352">
    <property type="entry name" value="THIOREDOXIN_2"/>
    <property type="match status" value="1"/>
</dbReference>
<dbReference type="PROSITE" id="PS01265">
    <property type="entry name" value="TPX"/>
    <property type="match status" value="1"/>
</dbReference>
<name>TPX_SALTY</name>
<accession>Q8ZP65</accession>
<sequence>MSQTVHFQGNPVTVANVIPQAGSKAQAFTLVAKDLSDVSLSQYAGKRKVLNIFPSIDTGVCAASVRKFNQLATEVENTVVLCVSADLPFAQSRFCGAEGLSNVITLSTLRNNEFLKNYGVEIVDGPLKGLAARAVIVLDENDNVIFSQLVDEITHEPDYDAALNVLKA</sequence>
<organism>
    <name type="scientific">Salmonella typhimurium (strain LT2 / SGSC1412 / ATCC 700720)</name>
    <dbReference type="NCBI Taxonomy" id="99287"/>
    <lineage>
        <taxon>Bacteria</taxon>
        <taxon>Pseudomonadati</taxon>
        <taxon>Pseudomonadota</taxon>
        <taxon>Gammaproteobacteria</taxon>
        <taxon>Enterobacterales</taxon>
        <taxon>Enterobacteriaceae</taxon>
        <taxon>Salmonella</taxon>
    </lineage>
</organism>
<keyword id="KW-0049">Antioxidant</keyword>
<keyword id="KW-1015">Disulfide bond</keyword>
<keyword id="KW-0560">Oxidoreductase</keyword>
<keyword id="KW-0575">Peroxidase</keyword>
<keyword id="KW-0676">Redox-active center</keyword>
<keyword id="KW-1185">Reference proteome</keyword>